<name>SHO1_SORMK</name>
<accession>D1ZRK4</accession>
<accession>F7W9Q7</accession>
<gene>
    <name type="primary">SHO1</name>
    <name type="ORF">SMAC_08497</name>
</gene>
<reference key="1">
    <citation type="journal article" date="2010" name="PLoS Genet.">
        <title>De novo assembly of a 40 Mb eukaryotic genome from short sequence reads: Sordaria macrospora, a model organism for fungal morphogenesis.</title>
        <authorList>
            <person name="Nowrousian M."/>
            <person name="Stajich J.E."/>
            <person name="Chu M."/>
            <person name="Engh I."/>
            <person name="Espagne E."/>
            <person name="Halliday K."/>
            <person name="Kamerewerd J."/>
            <person name="Kempken F."/>
            <person name="Knab B."/>
            <person name="Kuo H.-C."/>
            <person name="Osiewacz H.D."/>
            <person name="Poeggeler S."/>
            <person name="Read N.D."/>
            <person name="Seiler S."/>
            <person name="Smith K.M."/>
            <person name="Zickler D."/>
            <person name="Kueck U."/>
            <person name="Freitag M."/>
        </authorList>
    </citation>
    <scope>NUCLEOTIDE SEQUENCE [LARGE SCALE GENOMIC DNA]</scope>
    <source>
        <strain>ATCC MYA-333 / DSM 997 / K(L3346) / K-hell</strain>
    </source>
</reference>
<dbReference type="EMBL" id="CABT02000054">
    <property type="protein sequence ID" value="CCC14048.1"/>
    <property type="molecule type" value="Genomic_DNA"/>
</dbReference>
<dbReference type="RefSeq" id="XP_003345023.1">
    <property type="nucleotide sequence ID" value="XM_003344975.1"/>
</dbReference>
<dbReference type="SMR" id="D1ZRK4"/>
<dbReference type="FunCoup" id="D1ZRK4">
    <property type="interactions" value="119"/>
</dbReference>
<dbReference type="STRING" id="771870.D1ZRK4"/>
<dbReference type="GeneID" id="10802347"/>
<dbReference type="KEGG" id="smp:10802347"/>
<dbReference type="VEuPathDB" id="FungiDB:SMAC_08497"/>
<dbReference type="eggNOG" id="ENOG502QW7A">
    <property type="taxonomic scope" value="Eukaryota"/>
</dbReference>
<dbReference type="HOGENOM" id="CLU_043316_1_0_1"/>
<dbReference type="InParanoid" id="D1ZRK4"/>
<dbReference type="OMA" id="NIVWIFY"/>
<dbReference type="OrthoDB" id="5983572at2759"/>
<dbReference type="Proteomes" id="UP000001881">
    <property type="component" value="Unassembled WGS sequence"/>
</dbReference>
<dbReference type="GO" id="GO:0005886">
    <property type="term" value="C:plasma membrane"/>
    <property type="evidence" value="ECO:0007669"/>
    <property type="project" value="UniProtKB-SubCell"/>
</dbReference>
<dbReference type="CDD" id="cd11855">
    <property type="entry name" value="SH3_Sho1p"/>
    <property type="match status" value="1"/>
</dbReference>
<dbReference type="FunFam" id="2.30.30.40:FF:000213">
    <property type="entry name" value="High osmolarity signaling protein SHO1"/>
    <property type="match status" value="1"/>
</dbReference>
<dbReference type="Gene3D" id="2.30.30.40">
    <property type="entry name" value="SH3 Domains"/>
    <property type="match status" value="1"/>
</dbReference>
<dbReference type="InterPro" id="IPR036028">
    <property type="entry name" value="SH3-like_dom_sf"/>
</dbReference>
<dbReference type="InterPro" id="IPR001452">
    <property type="entry name" value="SH3_domain"/>
</dbReference>
<dbReference type="InterPro" id="IPR035522">
    <property type="entry name" value="Sho1_SH3"/>
</dbReference>
<dbReference type="Pfam" id="PF00018">
    <property type="entry name" value="SH3_1"/>
    <property type="match status" value="1"/>
</dbReference>
<dbReference type="SMART" id="SM00326">
    <property type="entry name" value="SH3"/>
    <property type="match status" value="1"/>
</dbReference>
<dbReference type="SUPFAM" id="SSF50044">
    <property type="entry name" value="SH3-domain"/>
    <property type="match status" value="1"/>
</dbReference>
<dbReference type="PROSITE" id="PS50002">
    <property type="entry name" value="SH3"/>
    <property type="match status" value="1"/>
</dbReference>
<feature type="chain" id="PRO_0000410399" description="High osmolarity signaling protein SHO1">
    <location>
        <begin position="1"/>
        <end position="320"/>
    </location>
</feature>
<feature type="topological domain" description="Cytoplasmic" evidence="2">
    <location>
        <begin position="1"/>
        <end position="40"/>
    </location>
</feature>
<feature type="transmembrane region" description="Helical" evidence="2">
    <location>
        <begin position="41"/>
        <end position="61"/>
    </location>
</feature>
<feature type="topological domain" description="Extracellular" evidence="2">
    <location>
        <begin position="62"/>
        <end position="77"/>
    </location>
</feature>
<feature type="transmembrane region" description="Helical" evidence="2">
    <location>
        <begin position="78"/>
        <end position="98"/>
    </location>
</feature>
<feature type="topological domain" description="Cytoplasmic" evidence="2">
    <location>
        <begin position="99"/>
        <end position="103"/>
    </location>
</feature>
<feature type="transmembrane region" description="Helical" evidence="2">
    <location>
        <begin position="104"/>
        <end position="124"/>
    </location>
</feature>
<feature type="topological domain" description="Extracellular" evidence="2">
    <location>
        <begin position="125"/>
        <end position="136"/>
    </location>
</feature>
<feature type="transmembrane region" description="Helical" evidence="2">
    <location>
        <begin position="137"/>
        <end position="157"/>
    </location>
</feature>
<feature type="topological domain" description="Cytoplasmic" evidence="2">
    <location>
        <begin position="158"/>
        <end position="320"/>
    </location>
</feature>
<feature type="domain" description="SH3" evidence="3">
    <location>
        <begin position="261"/>
        <end position="320"/>
    </location>
</feature>
<feature type="region of interest" description="Disordered" evidence="4">
    <location>
        <begin position="187"/>
        <end position="258"/>
    </location>
</feature>
<feature type="compositionally biased region" description="Polar residues" evidence="4">
    <location>
        <begin position="187"/>
        <end position="245"/>
    </location>
</feature>
<keyword id="KW-1003">Cell membrane</keyword>
<keyword id="KW-0472">Membrane</keyword>
<keyword id="KW-1185">Reference proteome</keyword>
<keyword id="KW-0728">SH3 domain</keyword>
<keyword id="KW-0346">Stress response</keyword>
<keyword id="KW-0812">Transmembrane</keyword>
<keyword id="KW-1133">Transmembrane helix</keyword>
<proteinExistence type="inferred from homology"/>
<comment type="function">
    <text evidence="1">Plasma membrane osmosensor that activates the high osmolarity glycerol (HOG) MAPK signaling pathway in response to high osmolarity.</text>
</comment>
<comment type="subunit">
    <text evidence="1">Forms homooligomers.</text>
</comment>
<comment type="subcellular location">
    <subcellularLocation>
        <location evidence="1">Cell membrane</location>
        <topology evidence="1">Multi-pass membrane protein</topology>
    </subcellularLocation>
</comment>
<comment type="similarity">
    <text evidence="5">Belongs to the SHO1 family.</text>
</comment>
<organism>
    <name type="scientific">Sordaria macrospora (strain ATCC MYA-333 / DSM 997 / K(L3346) / K-hell)</name>
    <dbReference type="NCBI Taxonomy" id="771870"/>
    <lineage>
        <taxon>Eukaryota</taxon>
        <taxon>Fungi</taxon>
        <taxon>Dikarya</taxon>
        <taxon>Ascomycota</taxon>
        <taxon>Pezizomycotina</taxon>
        <taxon>Sordariomycetes</taxon>
        <taxon>Sordariomycetidae</taxon>
        <taxon>Sordariales</taxon>
        <taxon>Sordariaceae</taxon>
        <taxon>Sordaria</taxon>
    </lineage>
</organism>
<evidence type="ECO:0000250" key="1"/>
<evidence type="ECO:0000255" key="2"/>
<evidence type="ECO:0000255" key="3">
    <source>
        <dbReference type="PROSITE-ProRule" id="PRU00192"/>
    </source>
</evidence>
<evidence type="ECO:0000256" key="4">
    <source>
        <dbReference type="SAM" id="MobiDB-lite"/>
    </source>
</evidence>
<evidence type="ECO:0000305" key="5"/>
<protein>
    <recommendedName>
        <fullName>High osmolarity signaling protein SHO1</fullName>
    </recommendedName>
    <alternativeName>
        <fullName>Osmosensor SHO1</fullName>
    </alternativeName>
</protein>
<sequence>MQSYGGSLNYSPSFNNPKMEHGRNSYRRKGIDMGNIIGDPFALATTSIATLAWIIILFGSIFGYRDQDPDKNLIWPTYSWFTLVFNFFLILGIFFVIASDSAQTYHVAIVGYLAVGLVGSTSSINNLIYSGVASMEATAAGYILLSMVTIIWIFYFGSAPSAVPRAYIDSFALSKESALPAHHMSRQTMNHNGLSSPNAYGSYNMRPETSASGLQPPQMYTGQLNGLENPARQSQIPQGFSSNNIPKPPQGTEGEIVPPTEYPYRAKAIFSYEANPDDANEISFSKHEVLEISDVSGRWWQARKETGETGIAPSNYLILL</sequence>